<proteinExistence type="evidence at protein level"/>
<evidence type="ECO:0000255" key="1">
    <source>
        <dbReference type="PROSITE-ProRule" id="PRU00338"/>
    </source>
</evidence>
<evidence type="ECO:0000256" key="2">
    <source>
        <dbReference type="SAM" id="MobiDB-lite"/>
    </source>
</evidence>
<evidence type="ECO:0000269" key="3">
    <source>
    </source>
</evidence>
<evidence type="ECO:0000269" key="4">
    <source>
    </source>
</evidence>
<evidence type="ECO:0000269" key="5">
    <source>
    </source>
</evidence>
<evidence type="ECO:0000305" key="6"/>
<evidence type="ECO:0000305" key="7">
    <source>
    </source>
</evidence>
<evidence type="ECO:0000305" key="8">
    <source>
    </source>
</evidence>
<organism>
    <name type="scientific">Homo sapiens</name>
    <name type="common">Human</name>
    <dbReference type="NCBI Taxonomy" id="9606"/>
    <lineage>
        <taxon>Eukaryota</taxon>
        <taxon>Metazoa</taxon>
        <taxon>Chordata</taxon>
        <taxon>Craniata</taxon>
        <taxon>Vertebrata</taxon>
        <taxon>Euteleostomi</taxon>
        <taxon>Mammalia</taxon>
        <taxon>Eutheria</taxon>
        <taxon>Euarchontoglires</taxon>
        <taxon>Primates</taxon>
        <taxon>Haplorrhini</taxon>
        <taxon>Catarrhini</taxon>
        <taxon>Hominidae</taxon>
        <taxon>Homo</taxon>
    </lineage>
</organism>
<accession>Q96DN6</accession>
<accession>Q8N3M0</accession>
<accession>Q8NA81</accession>
<accession>Q96Q00</accession>
<protein>
    <recommendedName>
        <fullName>Methyl-CpG-binding domain protein 6</fullName>
    </recommendedName>
    <alternativeName>
        <fullName>Methyl-CpG-binding protein MBD6</fullName>
    </alternativeName>
</protein>
<comment type="function">
    <text evidence="3 4 5">Non-catalytic component of the polycomb repressive deubiquitinase (PR-DUB) complex, a complex that specifically mediates deubiquitination of histone H2A monoubiquitinated at 'Lys-120' (H2AK119ub1) (PubMed:24634419). Important for stability of PR-DUB components and stimulating its ubiquitinase activity (PubMed:36180891). As part of the PR-DUB complex, associates with chromatin enriched in histone marks H3K4me1, H3K4me3, and H3K27Ac, but not in H3K27me3 (PubMed:36180891). MBD5 and MBD6 containing complexes associate with distinct chromatin regions enriched in genes involved in different pathways (PubMed:36180891). Heterochromatin recruitment is not mediated by DNA methylation (PubMed:20700456). The PR-DUB complex is an epigenetic regulator of gene expression, including genes involved in development, cell communication, signaling, cell proliferation and cell viability; may promote cancer cell growth (PubMed:36180891).</text>
</comment>
<comment type="subunit">
    <text evidence="4 5 8">Core component of the polycomb repressive deubiquitinase (PR-DUB) complex, at least composed of BAP1, one of ASXL1, ASXL2 or (probably) ASXL3, and one of MBD5 or MBD6 (PubMed:24634419, PubMed:36180891). Distinct combinations of ASXL and MBD proteins may preferentially bind specific histone modification marks (PubMed:36180891). The PR-DUB core associates with a number of accessory proteins, including FOXK1, FOXK2, KDM1B, HCFC1 and OGT; KDM1B specifically associates with ASXL2 PR-DUB complexes (Probable). Interacts (via MBD domain) with ASXL1, ASXL2 and ASXL3 (via PHD domain); the interaction is probably direct, mediates association with other PR-DUB complex core components (PubMed:24634419, PubMed:36180891).</text>
</comment>
<comment type="interaction">
    <interactant intactId="EBI-719591">
        <id>Q96DN6</id>
    </interactant>
    <interactant intactId="EBI-12043951">
        <id>Q76L83-2</id>
        <label>ASXL2</label>
    </interactant>
    <organismsDiffer>false</organismsDiffer>
    <experiments>4</experiments>
</comment>
<comment type="interaction">
    <interactant intactId="EBI-719591">
        <id>Q96DN6</id>
    </interactant>
    <interactant intactId="EBI-713635">
        <id>O43639</id>
        <label>NCK2</label>
    </interactant>
    <organismsDiffer>false</organismsDiffer>
    <experiments>3</experiments>
</comment>
<comment type="interaction">
    <interactant intactId="EBI-719591">
        <id>Q96DN6</id>
    </interactant>
    <interactant intactId="EBI-721525">
        <id>P98175</id>
        <label>RBM10</label>
    </interactant>
    <organismsDiffer>false</organismsDiffer>
    <experiments>3</experiments>
</comment>
<comment type="subcellular location">
    <subcellularLocation>
        <location evidence="3 4">Nucleus</location>
    </subcellularLocation>
    <subcellularLocation>
        <location evidence="3 4">Chromosome</location>
    </subcellularLocation>
    <text evidence="3 4">Associates with heterochromatin containing chromocentres in a subset of cells in a DNA methylation-independent manner (PubMed:20700456). Localizes to sites of DNA damage independent of the PR-DUB complex (PubMed:24634419).</text>
</comment>
<comment type="domain">
    <text evidence="3">Possesses a methyl-binding domain (MBD) that is necessary for chromocentric localization (PubMed:20700456). The MBD may lack methyl-binding activity (PubMed:20700456).</text>
</comment>
<comment type="miscellaneous">
    <text evidence="7">Named 'methyl-CpG-binding domain protein' for homology to other methyl-CpG-binding domain proteins and the presence of an MBD domain, MBD5 and MBD6 may have evolutionarily lost the ability to bind methylated DNA and are recruited to heterochromatin by alternative signals.</text>
</comment>
<dbReference type="EMBL" id="AK056399">
    <property type="protein sequence ID" value="BAB71176.1"/>
    <property type="molecule type" value="mRNA"/>
</dbReference>
<dbReference type="EMBL" id="AK093078">
    <property type="protein sequence ID" value="BAC04045.1"/>
    <property type="molecule type" value="mRNA"/>
</dbReference>
<dbReference type="EMBL" id="AB067474">
    <property type="protein sequence ID" value="BAB67780.1"/>
    <property type="molecule type" value="mRNA"/>
</dbReference>
<dbReference type="EMBL" id="AL834230">
    <property type="protein sequence ID" value="CAD38908.1"/>
    <property type="molecule type" value="mRNA"/>
</dbReference>
<dbReference type="EMBL" id="AC022506">
    <property type="status" value="NOT_ANNOTATED_CDS"/>
    <property type="molecule type" value="Genomic_DNA"/>
</dbReference>
<dbReference type="CCDS" id="CCDS8944.1"/>
<dbReference type="RefSeq" id="NP_443129.3">
    <property type="nucleotide sequence ID" value="NM_052897.3"/>
</dbReference>
<dbReference type="RefSeq" id="XP_047284193.1">
    <property type="nucleotide sequence ID" value="XM_047428237.1"/>
</dbReference>
<dbReference type="RefSeq" id="XP_047284194.1">
    <property type="nucleotide sequence ID" value="XM_047428238.1"/>
</dbReference>
<dbReference type="RefSeq" id="XP_054226967.1">
    <property type="nucleotide sequence ID" value="XM_054370992.1"/>
</dbReference>
<dbReference type="RefSeq" id="XP_054226968.1">
    <property type="nucleotide sequence ID" value="XM_054370993.1"/>
</dbReference>
<dbReference type="SMR" id="Q96DN6"/>
<dbReference type="BioGRID" id="125347">
    <property type="interactions" value="91"/>
</dbReference>
<dbReference type="FunCoup" id="Q96DN6">
    <property type="interactions" value="1538"/>
</dbReference>
<dbReference type="IntAct" id="Q96DN6">
    <property type="interactions" value="12"/>
</dbReference>
<dbReference type="STRING" id="9606.ENSP00000347896"/>
<dbReference type="GlyGen" id="Q96DN6">
    <property type="glycosylation" value="4 sites, 1 O-linked glycan (1 site)"/>
</dbReference>
<dbReference type="iPTMnet" id="Q96DN6"/>
<dbReference type="PhosphoSitePlus" id="Q96DN6"/>
<dbReference type="BioMuta" id="MBD6"/>
<dbReference type="DMDM" id="29336893"/>
<dbReference type="jPOST" id="Q96DN6"/>
<dbReference type="MassIVE" id="Q96DN6"/>
<dbReference type="PaxDb" id="9606-ENSP00000347896"/>
<dbReference type="PeptideAtlas" id="Q96DN6"/>
<dbReference type="ProteomicsDB" id="76302"/>
<dbReference type="Antibodypedia" id="50110">
    <property type="antibodies" value="49 antibodies from 15 providers"/>
</dbReference>
<dbReference type="DNASU" id="114785"/>
<dbReference type="Ensembl" id="ENST00000355673.8">
    <property type="protein sequence ID" value="ENSP00000347896.3"/>
    <property type="gene ID" value="ENSG00000166987.15"/>
</dbReference>
<dbReference type="GeneID" id="114785"/>
<dbReference type="KEGG" id="hsa:114785"/>
<dbReference type="MANE-Select" id="ENST00000355673.8">
    <property type="protein sequence ID" value="ENSP00000347896.3"/>
    <property type="RefSeq nucleotide sequence ID" value="NM_052897.4"/>
    <property type="RefSeq protein sequence ID" value="NP_443129.3"/>
</dbReference>
<dbReference type="UCSC" id="uc001soj.2">
    <property type="organism name" value="human"/>
</dbReference>
<dbReference type="AGR" id="HGNC:20445"/>
<dbReference type="CTD" id="114785"/>
<dbReference type="DisGeNET" id="114785"/>
<dbReference type="GeneCards" id="MBD6"/>
<dbReference type="HGNC" id="HGNC:20445">
    <property type="gene designation" value="MBD6"/>
</dbReference>
<dbReference type="HPA" id="ENSG00000166987">
    <property type="expression patterns" value="Low tissue specificity"/>
</dbReference>
<dbReference type="MalaCards" id="MBD6"/>
<dbReference type="MIM" id="619458">
    <property type="type" value="gene"/>
</dbReference>
<dbReference type="neXtProt" id="NX_Q96DN6"/>
<dbReference type="OpenTargets" id="ENSG00000166987"/>
<dbReference type="PharmGKB" id="PA134866196"/>
<dbReference type="VEuPathDB" id="HostDB:ENSG00000166987"/>
<dbReference type="eggNOG" id="ENOG502QR6I">
    <property type="taxonomic scope" value="Eukaryota"/>
</dbReference>
<dbReference type="GeneTree" id="ENSGT00530000064137"/>
<dbReference type="InParanoid" id="Q96DN6"/>
<dbReference type="OMA" id="PFHCSDA"/>
<dbReference type="OrthoDB" id="641149at2759"/>
<dbReference type="PAN-GO" id="Q96DN6">
    <property type="GO annotations" value="3 GO annotations based on evolutionary models"/>
</dbReference>
<dbReference type="PhylomeDB" id="Q96DN6"/>
<dbReference type="TreeFam" id="TF338183"/>
<dbReference type="PathwayCommons" id="Q96DN6"/>
<dbReference type="Reactome" id="R-HSA-5689603">
    <property type="pathway name" value="UCH proteinases"/>
</dbReference>
<dbReference type="SignaLink" id="Q96DN6"/>
<dbReference type="BioGRID-ORCS" id="114785">
    <property type="hits" value="42 hits in 1166 CRISPR screens"/>
</dbReference>
<dbReference type="ChiTaRS" id="MBD6">
    <property type="organism name" value="human"/>
</dbReference>
<dbReference type="GenomeRNAi" id="114785"/>
<dbReference type="Pharos" id="Q96DN6">
    <property type="development level" value="Tbio"/>
</dbReference>
<dbReference type="PRO" id="PR:Q96DN6"/>
<dbReference type="Proteomes" id="UP000005640">
    <property type="component" value="Chromosome 12"/>
</dbReference>
<dbReference type="RNAct" id="Q96DN6">
    <property type="molecule type" value="protein"/>
</dbReference>
<dbReference type="Bgee" id="ENSG00000166987">
    <property type="expression patterns" value="Expressed in oviduct epithelium and 187 other cell types or tissues"/>
</dbReference>
<dbReference type="ExpressionAtlas" id="Q96DN6">
    <property type="expression patterns" value="baseline and differential"/>
</dbReference>
<dbReference type="GO" id="GO:0010369">
    <property type="term" value="C:chromocenter"/>
    <property type="evidence" value="ECO:0000314"/>
    <property type="project" value="UniProtKB"/>
</dbReference>
<dbReference type="GO" id="GO:0005694">
    <property type="term" value="C:chromosome"/>
    <property type="evidence" value="ECO:0007669"/>
    <property type="project" value="UniProtKB-SubCell"/>
</dbReference>
<dbReference type="GO" id="GO:0001650">
    <property type="term" value="C:fibrillar center"/>
    <property type="evidence" value="ECO:0000314"/>
    <property type="project" value="HPA"/>
</dbReference>
<dbReference type="GO" id="GO:0005654">
    <property type="term" value="C:nucleoplasm"/>
    <property type="evidence" value="ECO:0000314"/>
    <property type="project" value="HPA"/>
</dbReference>
<dbReference type="GO" id="GO:0005634">
    <property type="term" value="C:nucleus"/>
    <property type="evidence" value="ECO:0000314"/>
    <property type="project" value="UniProtKB"/>
</dbReference>
<dbReference type="GO" id="GO:0003682">
    <property type="term" value="F:chromatin binding"/>
    <property type="evidence" value="ECO:0000314"/>
    <property type="project" value="UniProtKB"/>
</dbReference>
<dbReference type="InterPro" id="IPR016177">
    <property type="entry name" value="DNA-bd_dom_sf"/>
</dbReference>
<dbReference type="InterPro" id="IPR001739">
    <property type="entry name" value="Methyl_CpG_DNA-bd"/>
</dbReference>
<dbReference type="PANTHER" id="PTHR16112">
    <property type="entry name" value="METHYL-CPG BINDING PROTEIN, DROSOPHILA"/>
    <property type="match status" value="1"/>
</dbReference>
<dbReference type="PANTHER" id="PTHR16112:SF17">
    <property type="entry name" value="METHYL-CPG-BINDING DOMAIN PROTEIN 6"/>
    <property type="match status" value="1"/>
</dbReference>
<dbReference type="SMART" id="SM00391">
    <property type="entry name" value="MBD"/>
    <property type="match status" value="1"/>
</dbReference>
<dbReference type="SUPFAM" id="SSF54171">
    <property type="entry name" value="DNA-binding domain"/>
    <property type="match status" value="1"/>
</dbReference>
<dbReference type="PROSITE" id="PS50982">
    <property type="entry name" value="MBD"/>
    <property type="match status" value="1"/>
</dbReference>
<reference key="1">
    <citation type="journal article" date="2004" name="Nat. Genet.">
        <title>Complete sequencing and characterization of 21,243 full-length human cDNAs.</title>
        <authorList>
            <person name="Ota T."/>
            <person name="Suzuki Y."/>
            <person name="Nishikawa T."/>
            <person name="Otsuki T."/>
            <person name="Sugiyama T."/>
            <person name="Irie R."/>
            <person name="Wakamatsu A."/>
            <person name="Hayashi K."/>
            <person name="Sato H."/>
            <person name="Nagai K."/>
            <person name="Kimura K."/>
            <person name="Makita H."/>
            <person name="Sekine M."/>
            <person name="Obayashi M."/>
            <person name="Nishi T."/>
            <person name="Shibahara T."/>
            <person name="Tanaka T."/>
            <person name="Ishii S."/>
            <person name="Yamamoto J."/>
            <person name="Saito K."/>
            <person name="Kawai Y."/>
            <person name="Isono Y."/>
            <person name="Nakamura Y."/>
            <person name="Nagahari K."/>
            <person name="Murakami K."/>
            <person name="Yasuda T."/>
            <person name="Iwayanagi T."/>
            <person name="Wagatsuma M."/>
            <person name="Shiratori A."/>
            <person name="Sudo H."/>
            <person name="Hosoiri T."/>
            <person name="Kaku Y."/>
            <person name="Kodaira H."/>
            <person name="Kondo H."/>
            <person name="Sugawara M."/>
            <person name="Takahashi M."/>
            <person name="Kanda K."/>
            <person name="Yokoi T."/>
            <person name="Furuya T."/>
            <person name="Kikkawa E."/>
            <person name="Omura Y."/>
            <person name="Abe K."/>
            <person name="Kamihara K."/>
            <person name="Katsuta N."/>
            <person name="Sato K."/>
            <person name="Tanikawa M."/>
            <person name="Yamazaki M."/>
            <person name="Ninomiya K."/>
            <person name="Ishibashi T."/>
            <person name="Yamashita H."/>
            <person name="Murakawa K."/>
            <person name="Fujimori K."/>
            <person name="Tanai H."/>
            <person name="Kimata M."/>
            <person name="Watanabe M."/>
            <person name="Hiraoka S."/>
            <person name="Chiba Y."/>
            <person name="Ishida S."/>
            <person name="Ono Y."/>
            <person name="Takiguchi S."/>
            <person name="Watanabe S."/>
            <person name="Yosida M."/>
            <person name="Hotuta T."/>
            <person name="Kusano J."/>
            <person name="Kanehori K."/>
            <person name="Takahashi-Fujii A."/>
            <person name="Hara H."/>
            <person name="Tanase T.-O."/>
            <person name="Nomura Y."/>
            <person name="Togiya S."/>
            <person name="Komai F."/>
            <person name="Hara R."/>
            <person name="Takeuchi K."/>
            <person name="Arita M."/>
            <person name="Imose N."/>
            <person name="Musashino K."/>
            <person name="Yuuki H."/>
            <person name="Oshima A."/>
            <person name="Sasaki N."/>
            <person name="Aotsuka S."/>
            <person name="Yoshikawa Y."/>
            <person name="Matsunawa H."/>
            <person name="Ichihara T."/>
            <person name="Shiohata N."/>
            <person name="Sano S."/>
            <person name="Moriya S."/>
            <person name="Momiyama H."/>
            <person name="Satoh N."/>
            <person name="Takami S."/>
            <person name="Terashima Y."/>
            <person name="Suzuki O."/>
            <person name="Nakagawa S."/>
            <person name="Senoh A."/>
            <person name="Mizoguchi H."/>
            <person name="Goto Y."/>
            <person name="Shimizu F."/>
            <person name="Wakebe H."/>
            <person name="Hishigaki H."/>
            <person name="Watanabe T."/>
            <person name="Sugiyama A."/>
            <person name="Takemoto M."/>
            <person name="Kawakami B."/>
            <person name="Yamazaki M."/>
            <person name="Watanabe K."/>
            <person name="Kumagai A."/>
            <person name="Itakura S."/>
            <person name="Fukuzumi Y."/>
            <person name="Fujimori Y."/>
            <person name="Komiyama M."/>
            <person name="Tashiro H."/>
            <person name="Tanigami A."/>
            <person name="Fujiwara T."/>
            <person name="Ono T."/>
            <person name="Yamada K."/>
            <person name="Fujii Y."/>
            <person name="Ozaki K."/>
            <person name="Hirao M."/>
            <person name="Ohmori Y."/>
            <person name="Kawabata A."/>
            <person name="Hikiji T."/>
            <person name="Kobatake N."/>
            <person name="Inagaki H."/>
            <person name="Ikema Y."/>
            <person name="Okamoto S."/>
            <person name="Okitani R."/>
            <person name="Kawakami T."/>
            <person name="Noguchi S."/>
            <person name="Itoh T."/>
            <person name="Shigeta K."/>
            <person name="Senba T."/>
            <person name="Matsumura K."/>
            <person name="Nakajima Y."/>
            <person name="Mizuno T."/>
            <person name="Morinaga M."/>
            <person name="Sasaki M."/>
            <person name="Togashi T."/>
            <person name="Oyama M."/>
            <person name="Hata H."/>
            <person name="Watanabe M."/>
            <person name="Komatsu T."/>
            <person name="Mizushima-Sugano J."/>
            <person name="Satoh T."/>
            <person name="Shirai Y."/>
            <person name="Takahashi Y."/>
            <person name="Nakagawa K."/>
            <person name="Okumura K."/>
            <person name="Nagase T."/>
            <person name="Nomura N."/>
            <person name="Kikuchi H."/>
            <person name="Masuho Y."/>
            <person name="Yamashita R."/>
            <person name="Nakai K."/>
            <person name="Yada T."/>
            <person name="Nakamura Y."/>
            <person name="Ohara O."/>
            <person name="Isogai T."/>
            <person name="Sugano S."/>
        </authorList>
    </citation>
    <scope>NUCLEOTIDE SEQUENCE [LARGE SCALE MRNA]</scope>
    <source>
        <tissue>Testis</tissue>
    </source>
</reference>
<reference key="2">
    <citation type="journal article" date="2001" name="DNA Res.">
        <title>Prediction of the coding sequences of unidentified human genes. XXI. The complete sequences of 60 new cDNA clones from brain which code for large proteins.</title>
        <authorList>
            <person name="Nagase T."/>
            <person name="Kikuno R."/>
            <person name="Ohara O."/>
        </authorList>
    </citation>
    <scope>NUCLEOTIDE SEQUENCE [LARGE SCALE MRNA]</scope>
    <source>
        <tissue>Brain</tissue>
    </source>
</reference>
<reference key="3">
    <citation type="journal article" date="2007" name="BMC Genomics">
        <title>The full-ORF clone resource of the German cDNA consortium.</title>
        <authorList>
            <person name="Bechtel S."/>
            <person name="Rosenfelder H."/>
            <person name="Duda A."/>
            <person name="Schmidt C.P."/>
            <person name="Ernst U."/>
            <person name="Wellenreuther R."/>
            <person name="Mehrle A."/>
            <person name="Schuster C."/>
            <person name="Bahr A."/>
            <person name="Bloecker H."/>
            <person name="Heubner D."/>
            <person name="Hoerlein A."/>
            <person name="Michel G."/>
            <person name="Wedler H."/>
            <person name="Koehrer K."/>
            <person name="Ottenwaelder B."/>
            <person name="Poustka A."/>
            <person name="Wiemann S."/>
            <person name="Schupp I."/>
        </authorList>
    </citation>
    <scope>NUCLEOTIDE SEQUENCE [LARGE SCALE MRNA]</scope>
    <source>
        <tissue>Amygdala</tissue>
    </source>
</reference>
<reference key="4">
    <citation type="journal article" date="2006" name="Nature">
        <title>The finished DNA sequence of human chromosome 12.</title>
        <authorList>
            <person name="Scherer S.E."/>
            <person name="Muzny D.M."/>
            <person name="Buhay C.J."/>
            <person name="Chen R."/>
            <person name="Cree A."/>
            <person name="Ding Y."/>
            <person name="Dugan-Rocha S."/>
            <person name="Gill R."/>
            <person name="Gunaratne P."/>
            <person name="Harris R.A."/>
            <person name="Hawes A.C."/>
            <person name="Hernandez J."/>
            <person name="Hodgson A.V."/>
            <person name="Hume J."/>
            <person name="Jackson A."/>
            <person name="Khan Z.M."/>
            <person name="Kovar-Smith C."/>
            <person name="Lewis L.R."/>
            <person name="Lozado R.J."/>
            <person name="Metzker M.L."/>
            <person name="Milosavljevic A."/>
            <person name="Miner G.R."/>
            <person name="Montgomery K.T."/>
            <person name="Morgan M.B."/>
            <person name="Nazareth L.V."/>
            <person name="Scott G."/>
            <person name="Sodergren E."/>
            <person name="Song X.-Z."/>
            <person name="Steffen D."/>
            <person name="Lovering R.C."/>
            <person name="Wheeler D.A."/>
            <person name="Worley K.C."/>
            <person name="Yuan Y."/>
            <person name="Zhang Z."/>
            <person name="Adams C.Q."/>
            <person name="Ansari-Lari M.A."/>
            <person name="Ayele M."/>
            <person name="Brown M.J."/>
            <person name="Chen G."/>
            <person name="Chen Z."/>
            <person name="Clerc-Blankenburg K.P."/>
            <person name="Davis C."/>
            <person name="Delgado O."/>
            <person name="Dinh H.H."/>
            <person name="Draper H."/>
            <person name="Gonzalez-Garay M.L."/>
            <person name="Havlak P."/>
            <person name="Jackson L.R."/>
            <person name="Jacob L.S."/>
            <person name="Kelly S.H."/>
            <person name="Li L."/>
            <person name="Li Z."/>
            <person name="Liu J."/>
            <person name="Liu W."/>
            <person name="Lu J."/>
            <person name="Maheshwari M."/>
            <person name="Nguyen B.-V."/>
            <person name="Okwuonu G.O."/>
            <person name="Pasternak S."/>
            <person name="Perez L.M."/>
            <person name="Plopper F.J.H."/>
            <person name="Santibanez J."/>
            <person name="Shen H."/>
            <person name="Tabor P.E."/>
            <person name="Verduzco D."/>
            <person name="Waldron L."/>
            <person name="Wang Q."/>
            <person name="Williams G.A."/>
            <person name="Zhang J."/>
            <person name="Zhou J."/>
            <person name="Allen C.C."/>
            <person name="Amin A.G."/>
            <person name="Anyalebechi V."/>
            <person name="Bailey M."/>
            <person name="Barbaria J.A."/>
            <person name="Bimage K.E."/>
            <person name="Bryant N.P."/>
            <person name="Burch P.E."/>
            <person name="Burkett C.E."/>
            <person name="Burrell K.L."/>
            <person name="Calderon E."/>
            <person name="Cardenas V."/>
            <person name="Carter K."/>
            <person name="Casias K."/>
            <person name="Cavazos I."/>
            <person name="Cavazos S.R."/>
            <person name="Ceasar H."/>
            <person name="Chacko J."/>
            <person name="Chan S.N."/>
            <person name="Chavez D."/>
            <person name="Christopoulos C."/>
            <person name="Chu J."/>
            <person name="Cockrell R."/>
            <person name="Cox C.D."/>
            <person name="Dang M."/>
            <person name="Dathorne S.R."/>
            <person name="David R."/>
            <person name="Davis C.M."/>
            <person name="Davy-Carroll L."/>
            <person name="Deshazo D.R."/>
            <person name="Donlin J.E."/>
            <person name="D'Souza L."/>
            <person name="Eaves K.A."/>
            <person name="Egan A."/>
            <person name="Emery-Cohen A.J."/>
            <person name="Escotto M."/>
            <person name="Flagg N."/>
            <person name="Forbes L.D."/>
            <person name="Gabisi A.M."/>
            <person name="Garza M."/>
            <person name="Hamilton C."/>
            <person name="Henderson N."/>
            <person name="Hernandez O."/>
            <person name="Hines S."/>
            <person name="Hogues M.E."/>
            <person name="Huang M."/>
            <person name="Idlebird D.G."/>
            <person name="Johnson R."/>
            <person name="Jolivet A."/>
            <person name="Jones S."/>
            <person name="Kagan R."/>
            <person name="King L.M."/>
            <person name="Leal B."/>
            <person name="Lebow H."/>
            <person name="Lee S."/>
            <person name="LeVan J.M."/>
            <person name="Lewis L.C."/>
            <person name="London P."/>
            <person name="Lorensuhewa L.M."/>
            <person name="Loulseged H."/>
            <person name="Lovett D.A."/>
            <person name="Lucier A."/>
            <person name="Lucier R.L."/>
            <person name="Ma J."/>
            <person name="Madu R.C."/>
            <person name="Mapua P."/>
            <person name="Martindale A.D."/>
            <person name="Martinez E."/>
            <person name="Massey E."/>
            <person name="Mawhiney S."/>
            <person name="Meador M.G."/>
            <person name="Mendez S."/>
            <person name="Mercado C."/>
            <person name="Mercado I.C."/>
            <person name="Merritt C.E."/>
            <person name="Miner Z.L."/>
            <person name="Minja E."/>
            <person name="Mitchell T."/>
            <person name="Mohabbat F."/>
            <person name="Mohabbat K."/>
            <person name="Montgomery B."/>
            <person name="Moore N."/>
            <person name="Morris S."/>
            <person name="Munidasa M."/>
            <person name="Ngo R.N."/>
            <person name="Nguyen N.B."/>
            <person name="Nickerson E."/>
            <person name="Nwaokelemeh O.O."/>
            <person name="Nwokenkwo S."/>
            <person name="Obregon M."/>
            <person name="Oguh M."/>
            <person name="Oragunye N."/>
            <person name="Oviedo R.J."/>
            <person name="Parish B.J."/>
            <person name="Parker D.N."/>
            <person name="Parrish J."/>
            <person name="Parks K.L."/>
            <person name="Paul H.A."/>
            <person name="Payton B.A."/>
            <person name="Perez A."/>
            <person name="Perrin W."/>
            <person name="Pickens A."/>
            <person name="Primus E.L."/>
            <person name="Pu L.-L."/>
            <person name="Puazo M."/>
            <person name="Quiles M.M."/>
            <person name="Quiroz J.B."/>
            <person name="Rabata D."/>
            <person name="Reeves K."/>
            <person name="Ruiz S.J."/>
            <person name="Shao H."/>
            <person name="Sisson I."/>
            <person name="Sonaike T."/>
            <person name="Sorelle R.P."/>
            <person name="Sutton A.E."/>
            <person name="Svatek A.F."/>
            <person name="Svetz L.A."/>
            <person name="Tamerisa K.S."/>
            <person name="Taylor T.R."/>
            <person name="Teague B."/>
            <person name="Thomas N."/>
            <person name="Thorn R.D."/>
            <person name="Trejos Z.Y."/>
            <person name="Trevino B.K."/>
            <person name="Ukegbu O.N."/>
            <person name="Urban J.B."/>
            <person name="Vasquez L.I."/>
            <person name="Vera V.A."/>
            <person name="Villasana D.M."/>
            <person name="Wang L."/>
            <person name="Ward-Moore S."/>
            <person name="Warren J.T."/>
            <person name="Wei X."/>
            <person name="White F."/>
            <person name="Williamson A.L."/>
            <person name="Wleczyk R."/>
            <person name="Wooden H.S."/>
            <person name="Wooden S.H."/>
            <person name="Yen J."/>
            <person name="Yoon L."/>
            <person name="Yoon V."/>
            <person name="Zorrilla S.E."/>
            <person name="Nelson D."/>
            <person name="Kucherlapati R."/>
            <person name="Weinstock G."/>
            <person name="Gibbs R.A."/>
        </authorList>
    </citation>
    <scope>NUCLEOTIDE SEQUENCE [LARGE SCALE GENOMIC DNA]</scope>
</reference>
<reference key="5">
    <citation type="journal article" date="2010" name="PLoS ONE">
        <title>The human proteins MBD5 and MBD6 associate with heterochromatin but they do not bind methylated DNA.</title>
        <authorList>
            <person name="Laget S."/>
            <person name="Joulie M."/>
            <person name="Le Masson F."/>
            <person name="Sasai N."/>
            <person name="Christians E."/>
            <person name="Pradhan S."/>
            <person name="Roberts R.J."/>
            <person name="Defossez P.A."/>
        </authorList>
    </citation>
    <scope>FUNCTION</scope>
    <scope>SUBCELLULAR LOCATION</scope>
    <scope>DOMAIN MBD</scope>
</reference>
<reference key="6">
    <citation type="journal article" date="2013" name="J. Proteome Res.">
        <title>Toward a comprehensive characterization of a human cancer cell phosphoproteome.</title>
        <authorList>
            <person name="Zhou H."/>
            <person name="Di Palma S."/>
            <person name="Preisinger C."/>
            <person name="Peng M."/>
            <person name="Polat A.N."/>
            <person name="Heck A.J."/>
            <person name="Mohammed S."/>
        </authorList>
    </citation>
    <scope>IDENTIFICATION BY MASS SPECTROMETRY [LARGE SCALE ANALYSIS]</scope>
    <source>
        <tissue>Cervix carcinoma</tissue>
        <tissue>Erythroleukemia</tissue>
    </source>
</reference>
<reference key="7">
    <citation type="journal article" date="2014" name="Proteomics">
        <title>MBD5 and MBD6 interact with the human PR-DUB complex through their methyl-CpG-binding domain.</title>
        <authorList>
            <person name="Baymaz H.I."/>
            <person name="Fournier A."/>
            <person name="Laget S."/>
            <person name="Ji Z."/>
            <person name="Jansen P.W."/>
            <person name="Smits A.H."/>
            <person name="Ferry L."/>
            <person name="Mensinga A."/>
            <person name="Poser I."/>
            <person name="Sharrocks A."/>
            <person name="Defossez P.A."/>
            <person name="Vermeulen M."/>
        </authorList>
    </citation>
    <scope>FUNCTION</scope>
    <scope>IDENTIFICATION IN THE PR-DUB COMPLEX</scope>
    <scope>SUBCELLULAR LOCATION</scope>
    <scope>IDENTIFICATION BY MASS SPECTROMETRY</scope>
</reference>
<reference key="8">
    <citation type="journal article" date="2022" name="Genome Biol.">
        <title>MBD5 and MBD6 stabilize the BAP1 complex and promote BAP1-dependent cancer.</title>
        <authorList>
            <person name="Tsuboyama N."/>
            <person name="Szczepanski A.P."/>
            <person name="Zhao Z."/>
            <person name="Wang L."/>
        </authorList>
    </citation>
    <scope>FUNCTION</scope>
    <scope>IDENTIFICATION IN THE PR-DUB COMPLEX</scope>
    <scope>INTERACTION WITH ASXL1; ASXL2 AND ASXL3</scope>
    <scope>IDENTIFICATION BY MASS SPECTROMETRY</scope>
    <scope>MUTAGENESIS OF LYS-61 AND CYS-66</scope>
</reference>
<gene>
    <name type="primary">MBD6</name>
    <name type="synonym">KIAA1887</name>
</gene>
<keyword id="KW-0158">Chromosome</keyword>
<keyword id="KW-0539">Nucleus</keyword>
<keyword id="KW-1267">Proteomics identification</keyword>
<keyword id="KW-1185">Reference proteome</keyword>
<keyword id="KW-0833">Ubl conjugation pathway</keyword>
<name>MBD6_HUMAN</name>
<sequence length="1003" mass="101201">MNGGNESSGADRAGGPVATSVPIGWQRCVREGAVLYISPSGTELSSLEQTRSYLLSDGTCKCGLECPLNVPKVFNFDPLAPVTPGGAGVGPASEEDMTKLCNHRRKAVAMATLYRSMETTCSHSSPGEGASPQMFHTVSPGPPSARPPCRVPPTTPLNGGPGSLPPEPPSVSQAFPTLAGPGGLFPPRLADPVPSGGSSSPRFLPRGNAPSPAPPPPPAISLNAPSYNWGAALRSSLVPSDLGSPPAPHASSSPPSDPPLFHCSDALTPPPLPPSNNLPAHPGPASQPPVSSATMHLPLVLGPLGGAPTVEGPGAPPFLASSLLSAAAKAQHPPLPPPSTLQGRRPRAQAPSASHSSSLRPSQRRPRRPPTVFRLLEGRGPQTPRRSRPRAPAPVPQPFSLPEPSQPILPSVLSLLGLPTPGPSHSDGSFNLLGSDAHLPPPPTLSSGSPPQPRHPIQPSLPGTTSGSLSSVPGAPAPPAASKAPVVPSPVLQSPSEGLGMGAGPACPLPPLAGGEAFPFPSPEQGLALSGAGFPGMLGALPLPLSLGQPPPSPLLNHSLFGVLTGGGGQPPPEPLLPPPGGPGPPLAPGEPEGPSLLVASLLPPPPSDLLPPPSAPPSNLLASFLPLLALGPTAGDGEGSAEGAGGPSGEPFSGLGDLSPLLFPPLSAPPTLIALNSALLAATLDPPSGTPPQPCVLSAPQPGPPTSSVTTATTDPGASSLGKAPSNSGRPPQLLSPLLGASLLGDLSSLTSSPGALPSLLQPPGPLLSGQLGLQLLPGGGAPPPLSEASSPLACLLQSLQIPPEQPEAPCLPPESPASALEPEPARPPLSALAPPHGSPDPPVPELLTGRGSGKRGRRGGGGLRGINGEARPARGRKPGSRREPGRLALKWGTRGGFNGQMERSPRRTHHWQHNGELAEGGAEPKDPPPPGPHSEDLKVPPGVVRKSRRGRRRKYNPTRNSNSSRQDITLEPSPTARAAVPLPPRARPGRPAKNKRRKLAP</sequence>
<feature type="chain" id="PRO_0000096267" description="Methyl-CpG-binding domain protein 6">
    <location>
        <begin position="1"/>
        <end position="1003"/>
    </location>
</feature>
<feature type="domain" description="MBD" evidence="1">
    <location>
        <begin position="11"/>
        <end position="81"/>
    </location>
</feature>
<feature type="region of interest" description="Required for interaction with ASXL1/2/3" evidence="5">
    <location>
        <begin position="57"/>
        <end position="68"/>
    </location>
</feature>
<feature type="region of interest" description="Disordered" evidence="2">
    <location>
        <begin position="120"/>
        <end position="219"/>
    </location>
</feature>
<feature type="region of interest" description="Disordered" evidence="2">
    <location>
        <begin position="238"/>
        <end position="664"/>
    </location>
</feature>
<feature type="region of interest" description="Disordered" evidence="2">
    <location>
        <begin position="683"/>
        <end position="1003"/>
    </location>
</feature>
<feature type="compositionally biased region" description="Pro residues" evidence="2">
    <location>
        <begin position="140"/>
        <end position="155"/>
    </location>
</feature>
<feature type="compositionally biased region" description="Pro residues" evidence="2">
    <location>
        <begin position="268"/>
        <end position="287"/>
    </location>
</feature>
<feature type="compositionally biased region" description="Low complexity" evidence="2">
    <location>
        <begin position="297"/>
        <end position="308"/>
    </location>
</feature>
<feature type="compositionally biased region" description="Low complexity" evidence="2">
    <location>
        <begin position="319"/>
        <end position="328"/>
    </location>
</feature>
<feature type="compositionally biased region" description="Low complexity" evidence="2">
    <location>
        <begin position="348"/>
        <end position="361"/>
    </location>
</feature>
<feature type="compositionally biased region" description="Pro residues" evidence="2">
    <location>
        <begin position="391"/>
        <end position="407"/>
    </location>
</feature>
<feature type="compositionally biased region" description="Low complexity" evidence="2">
    <location>
        <begin position="408"/>
        <end position="426"/>
    </location>
</feature>
<feature type="compositionally biased region" description="Pro residues" evidence="2">
    <location>
        <begin position="439"/>
        <end position="456"/>
    </location>
</feature>
<feature type="compositionally biased region" description="Low complexity" evidence="2">
    <location>
        <begin position="460"/>
        <end position="498"/>
    </location>
</feature>
<feature type="compositionally biased region" description="Low complexity" evidence="2">
    <location>
        <begin position="531"/>
        <end position="548"/>
    </location>
</feature>
<feature type="compositionally biased region" description="Pro residues" evidence="2">
    <location>
        <begin position="570"/>
        <end position="589"/>
    </location>
</feature>
<feature type="compositionally biased region" description="Low complexity" evidence="2">
    <location>
        <begin position="590"/>
        <end position="602"/>
    </location>
</feature>
<feature type="compositionally biased region" description="Pro residues" evidence="2">
    <location>
        <begin position="603"/>
        <end position="617"/>
    </location>
</feature>
<feature type="compositionally biased region" description="Low complexity" evidence="2">
    <location>
        <begin position="618"/>
        <end position="633"/>
    </location>
</feature>
<feature type="compositionally biased region" description="Gly residues" evidence="2">
    <location>
        <begin position="635"/>
        <end position="649"/>
    </location>
</feature>
<feature type="compositionally biased region" description="Low complexity" evidence="2">
    <location>
        <begin position="650"/>
        <end position="662"/>
    </location>
</feature>
<feature type="compositionally biased region" description="Polar residues" evidence="2">
    <location>
        <begin position="707"/>
        <end position="718"/>
    </location>
</feature>
<feature type="compositionally biased region" description="Low complexity" evidence="2">
    <location>
        <begin position="732"/>
        <end position="761"/>
    </location>
</feature>
<feature type="compositionally biased region" description="Low complexity" evidence="2">
    <location>
        <begin position="768"/>
        <end position="778"/>
    </location>
</feature>
<feature type="compositionally biased region" description="Low complexity" evidence="2">
    <location>
        <begin position="788"/>
        <end position="798"/>
    </location>
</feature>
<feature type="compositionally biased region" description="Pro residues" evidence="2">
    <location>
        <begin position="805"/>
        <end position="817"/>
    </location>
</feature>
<feature type="compositionally biased region" description="Low complexity" evidence="2">
    <location>
        <begin position="818"/>
        <end position="837"/>
    </location>
</feature>
<feature type="compositionally biased region" description="Basic residues" evidence="2">
    <location>
        <begin position="947"/>
        <end position="958"/>
    </location>
</feature>
<feature type="compositionally biased region" description="Polar residues" evidence="2">
    <location>
        <begin position="959"/>
        <end position="969"/>
    </location>
</feature>
<feature type="compositionally biased region" description="Basic residues" evidence="2">
    <location>
        <begin position="989"/>
        <end position="1003"/>
    </location>
</feature>
<feature type="mutagenesis site" description="Disrupts interaction with ASXL1/2/3; when associated with A-66." evidence="5">
    <original>K</original>
    <variation>A</variation>
    <location>
        <position position="61"/>
    </location>
</feature>
<feature type="mutagenesis site" description="Disrupts interaction with ASXL1/2/3; when associated with A-61." evidence="5">
    <original>C</original>
    <variation>A</variation>
    <location>
        <position position="66"/>
    </location>
</feature>
<feature type="sequence conflict" description="In Ref. 1; BAB71176." evidence="6" ref="1">
    <original>D</original>
    <variation>G</variation>
    <location>
        <position position="637"/>
    </location>
</feature>
<feature type="sequence conflict" description="In Ref. 1; BAC04045." evidence="6" ref="1">
    <original>Q</original>
    <variation>QQ</variation>
    <location>
        <position position="802"/>
    </location>
</feature>